<dbReference type="EC" id="4.6.1.18"/>
<dbReference type="EMBL" id="AF449643">
    <property type="protein sequence ID" value="AAL87064.1"/>
    <property type="molecule type" value="Genomic_DNA"/>
</dbReference>
<dbReference type="SMR" id="Q8SPN3"/>
<dbReference type="GlyCosmos" id="Q8SPN3">
    <property type="glycosylation" value="2 sites, No reported glycans"/>
</dbReference>
<dbReference type="GO" id="GO:0005576">
    <property type="term" value="C:extracellular region"/>
    <property type="evidence" value="ECO:0007669"/>
    <property type="project" value="UniProtKB-SubCell"/>
</dbReference>
<dbReference type="GO" id="GO:0016829">
    <property type="term" value="F:lyase activity"/>
    <property type="evidence" value="ECO:0007669"/>
    <property type="project" value="UniProtKB-KW"/>
</dbReference>
<dbReference type="GO" id="GO:0003676">
    <property type="term" value="F:nucleic acid binding"/>
    <property type="evidence" value="ECO:0007669"/>
    <property type="project" value="InterPro"/>
</dbReference>
<dbReference type="GO" id="GO:0004522">
    <property type="term" value="F:ribonuclease A activity"/>
    <property type="evidence" value="ECO:0007669"/>
    <property type="project" value="UniProtKB-EC"/>
</dbReference>
<dbReference type="GO" id="GO:0050830">
    <property type="term" value="P:defense response to Gram-positive bacterium"/>
    <property type="evidence" value="ECO:0007669"/>
    <property type="project" value="TreeGrafter"/>
</dbReference>
<dbReference type="CDD" id="cd06265">
    <property type="entry name" value="RNase_A_canonical"/>
    <property type="match status" value="1"/>
</dbReference>
<dbReference type="FunFam" id="3.10.130.10:FF:000001">
    <property type="entry name" value="Ribonuclease pancreatic"/>
    <property type="match status" value="1"/>
</dbReference>
<dbReference type="Gene3D" id="3.10.130.10">
    <property type="entry name" value="Ribonuclease A-like domain"/>
    <property type="match status" value="1"/>
</dbReference>
<dbReference type="InterPro" id="IPR001427">
    <property type="entry name" value="RNaseA"/>
</dbReference>
<dbReference type="InterPro" id="IPR036816">
    <property type="entry name" value="RNaseA-like_dom_sf"/>
</dbReference>
<dbReference type="InterPro" id="IPR023411">
    <property type="entry name" value="RNaseA_AS"/>
</dbReference>
<dbReference type="InterPro" id="IPR023412">
    <property type="entry name" value="RNaseA_domain"/>
</dbReference>
<dbReference type="PANTHER" id="PTHR11437">
    <property type="entry name" value="RIBONUCLEASE"/>
    <property type="match status" value="1"/>
</dbReference>
<dbReference type="PANTHER" id="PTHR11437:SF24">
    <property type="entry name" value="RIBONUCLEASE PANCREATIC"/>
    <property type="match status" value="1"/>
</dbReference>
<dbReference type="Pfam" id="PF00074">
    <property type="entry name" value="RnaseA"/>
    <property type="match status" value="1"/>
</dbReference>
<dbReference type="PRINTS" id="PR00794">
    <property type="entry name" value="RIBONUCLEASE"/>
</dbReference>
<dbReference type="SMART" id="SM00092">
    <property type="entry name" value="RNAse_Pc"/>
    <property type="match status" value="1"/>
</dbReference>
<dbReference type="SUPFAM" id="SSF54076">
    <property type="entry name" value="RNase A-like"/>
    <property type="match status" value="1"/>
</dbReference>
<dbReference type="PROSITE" id="PS00127">
    <property type="entry name" value="RNASE_PANCREATIC"/>
    <property type="match status" value="1"/>
</dbReference>
<organism>
    <name type="scientific">Pygathrix nemaeus</name>
    <name type="common">Red-shanked douc langur</name>
    <dbReference type="NCBI Taxonomy" id="54133"/>
    <lineage>
        <taxon>Eukaryota</taxon>
        <taxon>Metazoa</taxon>
        <taxon>Chordata</taxon>
        <taxon>Craniata</taxon>
        <taxon>Vertebrata</taxon>
        <taxon>Euteleostomi</taxon>
        <taxon>Mammalia</taxon>
        <taxon>Eutheria</taxon>
        <taxon>Euarchontoglires</taxon>
        <taxon>Primates</taxon>
        <taxon>Haplorrhini</taxon>
        <taxon>Catarrhini</taxon>
        <taxon>Cercopithecidae</taxon>
        <taxon>Colobinae</taxon>
        <taxon>Pygathrix</taxon>
    </lineage>
</organism>
<evidence type="ECO:0000250" key="1"/>
<evidence type="ECO:0000255" key="2"/>
<evidence type="ECO:0000305" key="3"/>
<feature type="signal peptide" evidence="1">
    <location>
        <begin position="1"/>
        <end position="28"/>
    </location>
</feature>
<feature type="chain" id="PRO_0000030939" description="Ribonuclease 1B pancreatic">
    <location>
        <begin position="29"/>
        <end position="156"/>
    </location>
</feature>
<feature type="active site" description="Proton acceptor" evidence="1">
    <location>
        <position position="40"/>
    </location>
</feature>
<feature type="active site" description="Proton donor" evidence="1">
    <location>
        <position position="147"/>
    </location>
</feature>
<feature type="binding site" evidence="1">
    <location>
        <position position="35"/>
    </location>
    <ligand>
        <name>substrate</name>
    </ligand>
</feature>
<feature type="binding site" evidence="1">
    <location>
        <position position="38"/>
    </location>
    <ligand>
        <name>substrate</name>
    </ligand>
</feature>
<feature type="binding site" evidence="1">
    <location>
        <begin position="69"/>
        <end position="73"/>
    </location>
    <ligand>
        <name>substrate</name>
    </ligand>
</feature>
<feature type="binding site" evidence="1">
    <location>
        <position position="94"/>
    </location>
    <ligand>
        <name>substrate</name>
    </ligand>
</feature>
<feature type="binding site" evidence="1">
    <location>
        <position position="113"/>
    </location>
    <ligand>
        <name>substrate</name>
    </ligand>
</feature>
<feature type="glycosylation site" description="N-linked (GlcNAc...) asparagine" evidence="2">
    <location>
        <position position="62"/>
    </location>
</feature>
<feature type="glycosylation site" description="N-linked (GlcNAc...) asparagine" evidence="2">
    <location>
        <position position="116"/>
    </location>
</feature>
<feature type="disulfide bond" evidence="1">
    <location>
        <begin position="54"/>
        <end position="112"/>
    </location>
</feature>
<feature type="disulfide bond" evidence="1">
    <location>
        <begin position="68"/>
        <end position="123"/>
    </location>
</feature>
<feature type="disulfide bond" evidence="1">
    <location>
        <begin position="86"/>
        <end position="138"/>
    </location>
</feature>
<feature type="disulfide bond" evidence="1">
    <location>
        <begin position="93"/>
        <end position="100"/>
    </location>
</feature>
<reference key="1">
    <citation type="journal article" date="2002" name="Nat. Genet.">
        <title>Adaptive evolution of a duplicated pancreatic ribonuclease gene in a leaf-eating monkey.</title>
        <authorList>
            <person name="Zhang J."/>
            <person name="Zhang Y.-P."/>
            <person name="Rosenberg H.F."/>
        </authorList>
    </citation>
    <scope>NUCLEOTIDE SEQUENCE [GENOMIC DNA]</scope>
</reference>
<keyword id="KW-1015">Disulfide bond</keyword>
<keyword id="KW-0255">Endonuclease</keyword>
<keyword id="KW-0325">Glycoprotein</keyword>
<keyword id="KW-0378">Hydrolase</keyword>
<keyword id="KW-0456">Lyase</keyword>
<keyword id="KW-0540">Nuclease</keyword>
<keyword id="KW-0964">Secreted</keyword>
<keyword id="KW-0732">Signal</keyword>
<name>RNS1B_PYGNE</name>
<sequence length="156" mass="17363">MALDKSVIPLPLLVVVLLVLGWAQPSLGGESQAEKFQRQHMDSGSSPSSSSTYCNQMMKLRNMTQGWCKSVNTFVHEPLVDVQNVCFQEKVTCKNGQTNCFKSNSKMHITECRLTNGSKYPNCAYQTSPKERHIIVACEGSPYVPVHFDDSVEDST</sequence>
<comment type="function">
    <text>Endonuclease that catalyzes the cleavage of RNA on the 3' side of pyrimidine nucleotides. Compared to RNASE1 it has lost activity towards dsRNA.</text>
</comment>
<comment type="catalytic activity">
    <reaction>
        <text>an [RNA] containing cytidine + H2O = an [RNA]-3'-cytidine-3'-phosphate + a 5'-hydroxy-ribonucleotide-3'-[RNA].</text>
        <dbReference type="EC" id="4.6.1.18"/>
    </reaction>
</comment>
<comment type="catalytic activity">
    <reaction>
        <text>an [RNA] containing uridine + H2O = an [RNA]-3'-uridine-3'-phosphate + a 5'-hydroxy-ribonucleotide-3'-[RNA].</text>
        <dbReference type="EC" id="4.6.1.18"/>
    </reaction>
</comment>
<comment type="subunit">
    <text evidence="1">Monomer.</text>
</comment>
<comment type="subcellular location">
    <subcellularLocation>
        <location evidence="1">Secreted</location>
    </subcellularLocation>
</comment>
<comment type="similarity">
    <text evidence="3">Belongs to the pancreatic ribonuclease family.</text>
</comment>
<protein>
    <recommendedName>
        <fullName>Ribonuclease 1B pancreatic</fullName>
        <shortName>RNase 1B</shortName>
        <ecNumber>4.6.1.18</ecNumber>
    </recommendedName>
</protein>
<proteinExistence type="inferred from homology"/>
<accession>Q8SPN3</accession>
<gene>
    <name type="primary">RNASE1B</name>
</gene>